<gene>
    <name type="primary">lacA</name>
</gene>
<keyword id="KW-0002">3D-structure</keyword>
<keyword id="KW-0119">Carbohydrate metabolism</keyword>
<keyword id="KW-1015">Disulfide bond</keyword>
<keyword id="KW-0325">Glycoprotein</keyword>
<keyword id="KW-0326">Glycosidase</keyword>
<keyword id="KW-0378">Hydrolase</keyword>
<keyword id="KW-0624">Polysaccharide degradation</keyword>
<keyword id="KW-0964">Secreted</keyword>
<keyword id="KW-0732">Signal</keyword>
<comment type="function">
    <text evidence="2">Cleaves beta-linked terminal galactosyl residues from gangliosides, glycoproteins, and glycosaminoglycans. Has high in vitro transglycosylation activity with p-nitrophenyl-beta-D-galactopyranoside, methyl-beta-D-galactopyranoside or lactose as a donor and galactose as an acceptor.</text>
</comment>
<comment type="catalytic activity">
    <reaction evidence="2">
        <text>Hydrolysis of terminal non-reducing beta-D-galactose residues in beta-D-galactosides.</text>
        <dbReference type="EC" id="3.2.1.23"/>
    </reaction>
</comment>
<comment type="subunit">
    <text evidence="2">Monomer.</text>
</comment>
<comment type="subcellular location">
    <subcellularLocation>
        <location evidence="2">Secreted</location>
    </subcellularLocation>
</comment>
<comment type="similarity">
    <text evidence="4">Belongs to the glycosyl hydrolase 35 family.</text>
</comment>
<name>BGALA_PENSQ</name>
<dbReference type="EC" id="3.2.1.23" evidence="2"/>
<dbReference type="EMBL" id="AJ629057">
    <property type="protein sequence ID" value="CAF32457.1"/>
    <property type="molecule type" value="Genomic_DNA"/>
</dbReference>
<dbReference type="PDB" id="1TG7">
    <property type="method" value="X-ray"/>
    <property type="resolution" value="1.90 A"/>
    <property type="chains" value="A=41-1011"/>
</dbReference>
<dbReference type="PDB" id="1XC6">
    <property type="method" value="X-ray"/>
    <property type="resolution" value="2.10 A"/>
    <property type="chains" value="A=41-1011"/>
</dbReference>
<dbReference type="PDBsum" id="1TG7"/>
<dbReference type="PDBsum" id="1XC6"/>
<dbReference type="SMR" id="Q700S9"/>
<dbReference type="CAZy" id="GH35">
    <property type="family name" value="Glycoside Hydrolase Family 35"/>
</dbReference>
<dbReference type="GlyCosmos" id="Q700S9">
    <property type="glycosylation" value="7 sites, No reported glycans"/>
</dbReference>
<dbReference type="iPTMnet" id="Q700S9"/>
<dbReference type="EvolutionaryTrace" id="Q700S9"/>
<dbReference type="GO" id="GO:0005576">
    <property type="term" value="C:extracellular region"/>
    <property type="evidence" value="ECO:0000314"/>
    <property type="project" value="UniProtKB"/>
</dbReference>
<dbReference type="GO" id="GO:0005615">
    <property type="term" value="C:extracellular space"/>
    <property type="evidence" value="ECO:0000314"/>
    <property type="project" value="UniProtKB"/>
</dbReference>
<dbReference type="GO" id="GO:0004565">
    <property type="term" value="F:beta-galactosidase activity"/>
    <property type="evidence" value="ECO:0000314"/>
    <property type="project" value="UniProtKB"/>
</dbReference>
<dbReference type="GO" id="GO:0005534">
    <property type="term" value="F:galactose binding"/>
    <property type="evidence" value="ECO:0000314"/>
    <property type="project" value="UniProtKB"/>
</dbReference>
<dbReference type="GO" id="GO:0005990">
    <property type="term" value="P:lactose catabolic process"/>
    <property type="evidence" value="ECO:0000314"/>
    <property type="project" value="UniProtKB"/>
</dbReference>
<dbReference type="GO" id="GO:0000272">
    <property type="term" value="P:polysaccharide catabolic process"/>
    <property type="evidence" value="ECO:0007669"/>
    <property type="project" value="UniProtKB-KW"/>
</dbReference>
<dbReference type="FunFam" id="2.102.20.10:FF:000001">
    <property type="entry name" value="Beta-galactosidase A"/>
    <property type="match status" value="1"/>
</dbReference>
<dbReference type="FunFam" id="2.60.120.260:FF:000065">
    <property type="entry name" value="Beta-galactosidase A"/>
    <property type="match status" value="1"/>
</dbReference>
<dbReference type="FunFam" id="2.60.120.260:FF:000088">
    <property type="entry name" value="Beta-galactosidase A"/>
    <property type="match status" value="1"/>
</dbReference>
<dbReference type="FunFam" id="2.60.390.10:FF:000001">
    <property type="entry name" value="Beta-galactosidase A"/>
    <property type="match status" value="1"/>
</dbReference>
<dbReference type="FunFam" id="3.20.20.80:FF:000040">
    <property type="entry name" value="Beta-galactosidase A"/>
    <property type="match status" value="1"/>
</dbReference>
<dbReference type="Gene3D" id="2.102.20.10">
    <property type="entry name" value="Beta-galactosidase, domain 2"/>
    <property type="match status" value="1"/>
</dbReference>
<dbReference type="Gene3D" id="2.60.390.10">
    <property type="entry name" value="Beta-galactosidase, domain 3"/>
    <property type="match status" value="1"/>
</dbReference>
<dbReference type="Gene3D" id="2.60.120.260">
    <property type="entry name" value="Galactose-binding domain-like"/>
    <property type="match status" value="2"/>
</dbReference>
<dbReference type="Gene3D" id="3.20.20.80">
    <property type="entry name" value="Glycosidases"/>
    <property type="match status" value="1"/>
</dbReference>
<dbReference type="InterPro" id="IPR018954">
    <property type="entry name" value="Betagal_dom2"/>
</dbReference>
<dbReference type="InterPro" id="IPR037110">
    <property type="entry name" value="Betagal_dom2_sf"/>
</dbReference>
<dbReference type="InterPro" id="IPR025972">
    <property type="entry name" value="BetaGal_dom3"/>
</dbReference>
<dbReference type="InterPro" id="IPR036833">
    <property type="entry name" value="BetaGal_dom3_sf"/>
</dbReference>
<dbReference type="InterPro" id="IPR025300">
    <property type="entry name" value="BetaGal_jelly_roll_dom"/>
</dbReference>
<dbReference type="InterPro" id="IPR008979">
    <property type="entry name" value="Galactose-bd-like_sf"/>
</dbReference>
<dbReference type="InterPro" id="IPR031330">
    <property type="entry name" value="Gly_Hdrlase_35_cat"/>
</dbReference>
<dbReference type="InterPro" id="IPR019801">
    <property type="entry name" value="Glyco_hydro_35_CS"/>
</dbReference>
<dbReference type="InterPro" id="IPR001944">
    <property type="entry name" value="Glycoside_Hdrlase_35"/>
</dbReference>
<dbReference type="InterPro" id="IPR017853">
    <property type="entry name" value="Glycoside_hydrolase_SF"/>
</dbReference>
<dbReference type="PANTHER" id="PTHR23421">
    <property type="entry name" value="BETA-GALACTOSIDASE RELATED"/>
    <property type="match status" value="1"/>
</dbReference>
<dbReference type="Pfam" id="PF13364">
    <property type="entry name" value="BetaGal_ABD2"/>
    <property type="match status" value="2"/>
</dbReference>
<dbReference type="Pfam" id="PF10435">
    <property type="entry name" value="BetaGal_dom2"/>
    <property type="match status" value="1"/>
</dbReference>
<dbReference type="Pfam" id="PF13363">
    <property type="entry name" value="BetaGal_dom3"/>
    <property type="match status" value="1"/>
</dbReference>
<dbReference type="Pfam" id="PF01301">
    <property type="entry name" value="Glyco_hydro_35"/>
    <property type="match status" value="1"/>
</dbReference>
<dbReference type="PRINTS" id="PR00742">
    <property type="entry name" value="GLHYDRLASE35"/>
</dbReference>
<dbReference type="SMART" id="SM01029">
    <property type="entry name" value="BetaGal_dom2"/>
    <property type="match status" value="1"/>
</dbReference>
<dbReference type="SUPFAM" id="SSF51445">
    <property type="entry name" value="(Trans)glycosidases"/>
    <property type="match status" value="1"/>
</dbReference>
<dbReference type="SUPFAM" id="SSF117100">
    <property type="entry name" value="Beta-galactosidase LacA, domain 3"/>
    <property type="match status" value="1"/>
</dbReference>
<dbReference type="SUPFAM" id="SSF49785">
    <property type="entry name" value="Galactose-binding domain-like"/>
    <property type="match status" value="2"/>
</dbReference>
<dbReference type="SUPFAM" id="SSF51011">
    <property type="entry name" value="Glycosyl hydrolase domain"/>
    <property type="match status" value="1"/>
</dbReference>
<dbReference type="PROSITE" id="PS01182">
    <property type="entry name" value="GLYCOSYL_HYDROL_F35"/>
    <property type="match status" value="1"/>
</dbReference>
<protein>
    <recommendedName>
        <fullName evidence="4">Beta-galactosidase A</fullName>
        <ecNumber evidence="2">3.2.1.23</ecNumber>
    </recommendedName>
    <alternativeName>
        <fullName>Lactase A</fullName>
    </alternativeName>
</protein>
<feature type="signal peptide" evidence="1">
    <location>
        <begin position="1"/>
        <end position="19"/>
    </location>
</feature>
<feature type="chain" id="PRO_5000072460" description="Beta-galactosidase A">
    <location>
        <begin position="20"/>
        <end position="1011"/>
    </location>
</feature>
<feature type="active site" description="Proton donor" evidence="1">
    <location>
        <position position="200"/>
    </location>
</feature>
<feature type="active site" description="Nucleophile" evidence="1">
    <location>
        <position position="299"/>
    </location>
</feature>
<feature type="binding site" evidence="3 5">
    <location>
        <position position="96"/>
    </location>
    <ligand>
        <name>substrate</name>
    </ligand>
</feature>
<feature type="binding site" evidence="3 5">
    <location>
        <begin position="140"/>
        <end position="142"/>
    </location>
    <ligand>
        <name>substrate</name>
    </ligand>
</feature>
<feature type="binding site" evidence="3 5">
    <location>
        <position position="199"/>
    </location>
    <ligand>
        <name>substrate</name>
    </ligand>
</feature>
<feature type="binding site" evidence="3 5">
    <location>
        <position position="365"/>
    </location>
    <ligand>
        <name>substrate</name>
    </ligand>
</feature>
<feature type="glycosylation site" description="N-linked (GlcNAc...) asparagine" evidence="3 5">
    <location>
        <position position="374"/>
    </location>
</feature>
<feature type="glycosylation site" description="N-linked (GlcNAc...) asparagine" evidence="3 5">
    <location>
        <position position="456"/>
    </location>
</feature>
<feature type="glycosylation site" description="N-linked (GlcNAc...) asparagine" evidence="3 5">
    <location>
        <position position="625"/>
    </location>
</feature>
<feature type="glycosylation site" description="N-linked (GlcNAc...) asparagine" evidence="3 5">
    <location>
        <position position="707"/>
    </location>
</feature>
<feature type="glycosylation site" description="N-linked (GlcNAc...) asparagine" evidence="3 5">
    <location>
        <position position="763"/>
    </location>
</feature>
<feature type="glycosylation site" description="N-linked (GlcNAc...) asparagine" evidence="3 5">
    <location>
        <position position="780"/>
    </location>
</feature>
<feature type="glycosylation site" description="N-linked (GlcNAc...) asparagine" evidence="3 5">
    <location>
        <position position="917"/>
    </location>
</feature>
<feature type="disulfide bond" evidence="3 5">
    <location>
        <begin position="205"/>
        <end position="206"/>
    </location>
</feature>
<feature type="disulfide bond" evidence="3 5">
    <location>
        <begin position="267"/>
        <end position="316"/>
    </location>
</feature>
<feature type="strand" evidence="6">
    <location>
        <begin position="44"/>
        <end position="48"/>
    </location>
</feature>
<feature type="strand" evidence="6">
    <location>
        <begin position="53"/>
        <end position="55"/>
    </location>
</feature>
<feature type="strand" evidence="6">
    <location>
        <begin position="58"/>
        <end position="60"/>
    </location>
</feature>
<feature type="strand" evidence="6">
    <location>
        <begin position="62"/>
        <end position="66"/>
    </location>
</feature>
<feature type="helix" evidence="6">
    <location>
        <begin position="69"/>
        <end position="71"/>
    </location>
</feature>
<feature type="helix" evidence="6">
    <location>
        <begin position="75"/>
        <end position="77"/>
    </location>
</feature>
<feature type="helix" evidence="6">
    <location>
        <begin position="78"/>
        <end position="86"/>
    </location>
</feature>
<feature type="turn" evidence="6">
    <location>
        <begin position="87"/>
        <end position="89"/>
    </location>
</feature>
<feature type="strand" evidence="6">
    <location>
        <begin position="92"/>
        <end position="96"/>
    </location>
</feature>
<feature type="helix" evidence="6">
    <location>
        <begin position="99"/>
        <end position="102"/>
    </location>
</feature>
<feature type="helix" evidence="6">
    <location>
        <begin position="113"/>
        <end position="115"/>
    </location>
</feature>
<feature type="helix" evidence="6">
    <location>
        <begin position="118"/>
        <end position="127"/>
    </location>
</feature>
<feature type="strand" evidence="6">
    <location>
        <begin position="130"/>
        <end position="134"/>
    </location>
</feature>
<feature type="helix" evidence="6">
    <location>
        <begin position="144"/>
        <end position="147"/>
    </location>
</feature>
<feature type="helix" evidence="6">
    <location>
        <begin position="150"/>
        <end position="154"/>
    </location>
</feature>
<feature type="helix" evidence="6">
    <location>
        <begin position="164"/>
        <end position="183"/>
    </location>
</feature>
<feature type="helix" evidence="6">
    <location>
        <begin position="186"/>
        <end position="188"/>
    </location>
</feature>
<feature type="strand" evidence="6">
    <location>
        <begin position="190"/>
        <end position="195"/>
    </location>
</feature>
<feature type="helix" evidence="6">
    <location>
        <begin position="214"/>
        <end position="226"/>
    </location>
</feature>
<feature type="strand" evidence="6">
    <location>
        <begin position="237"/>
        <end position="241"/>
    </location>
</feature>
<feature type="strand" evidence="6">
    <location>
        <begin position="257"/>
        <end position="260"/>
    </location>
</feature>
<feature type="helix" evidence="6">
    <location>
        <begin position="282"/>
        <end position="289"/>
    </location>
</feature>
<feature type="strand" evidence="6">
    <location>
        <begin position="296"/>
        <end position="303"/>
    </location>
</feature>
<feature type="helix" evidence="6">
    <location>
        <begin position="313"/>
        <end position="319"/>
    </location>
</feature>
<feature type="helix" evidence="6">
    <location>
        <begin position="322"/>
        <end position="333"/>
    </location>
</feature>
<feature type="turn" evidence="6">
    <location>
        <begin position="334"/>
        <end position="336"/>
    </location>
</feature>
<feature type="strand" evidence="6">
    <location>
        <begin position="338"/>
        <end position="343"/>
    </location>
</feature>
<feature type="helix" evidence="6">
    <location>
        <begin position="378"/>
        <end position="391"/>
    </location>
</feature>
<feature type="helix" evidence="6">
    <location>
        <begin position="394"/>
        <end position="397"/>
    </location>
</feature>
<feature type="strand" evidence="6">
    <location>
        <begin position="399"/>
        <end position="401"/>
    </location>
</feature>
<feature type="strand" evidence="6">
    <location>
        <begin position="405"/>
        <end position="411"/>
    </location>
</feature>
<feature type="strand" evidence="6">
    <location>
        <begin position="415"/>
        <end position="421"/>
    </location>
</feature>
<feature type="strand" evidence="6">
    <location>
        <begin position="429"/>
        <end position="437"/>
    </location>
</feature>
<feature type="strand" evidence="6">
    <location>
        <begin position="444"/>
        <end position="446"/>
    </location>
</feature>
<feature type="strand" evidence="6">
    <location>
        <begin position="448"/>
        <end position="452"/>
    </location>
</feature>
<feature type="strand" evidence="6">
    <location>
        <begin position="455"/>
        <end position="459"/>
    </location>
</feature>
<feature type="strand" evidence="6">
    <location>
        <begin position="461"/>
        <end position="464"/>
    </location>
</feature>
<feature type="strand" evidence="6">
    <location>
        <begin position="466"/>
        <end position="468"/>
    </location>
</feature>
<feature type="strand" evidence="6">
    <location>
        <begin position="474"/>
        <end position="482"/>
    </location>
</feature>
<feature type="strand" evidence="6">
    <location>
        <begin position="485"/>
        <end position="500"/>
    </location>
</feature>
<feature type="strand" evidence="6">
    <location>
        <begin position="503"/>
        <end position="510"/>
    </location>
</feature>
<feature type="strand" evidence="6">
    <location>
        <begin position="515"/>
        <end position="521"/>
    </location>
</feature>
<feature type="strand" evidence="6">
    <location>
        <begin position="527"/>
        <end position="531"/>
    </location>
</feature>
<feature type="strand" evidence="6">
    <location>
        <begin position="537"/>
        <end position="541"/>
    </location>
</feature>
<feature type="strand" evidence="6">
    <location>
        <begin position="544"/>
        <end position="550"/>
    </location>
</feature>
<feature type="strand" evidence="6">
    <location>
        <begin position="556"/>
        <end position="560"/>
    </location>
</feature>
<feature type="strand" evidence="6">
    <location>
        <begin position="563"/>
        <end position="569"/>
    </location>
</feature>
<feature type="helix" evidence="6">
    <location>
        <begin position="570"/>
        <end position="573"/>
    </location>
</feature>
<feature type="strand" evidence="6">
    <location>
        <begin position="583"/>
        <end position="586"/>
    </location>
</feature>
<feature type="helix" evidence="6">
    <location>
        <begin position="593"/>
        <end position="597"/>
    </location>
</feature>
<feature type="strand" evidence="6">
    <location>
        <begin position="601"/>
        <end position="603"/>
    </location>
</feature>
<feature type="strand" evidence="6">
    <location>
        <begin position="605"/>
        <end position="614"/>
    </location>
</feature>
<feature type="strand" evidence="6">
    <location>
        <begin position="617"/>
        <end position="626"/>
    </location>
</feature>
<feature type="strand" evidence="6">
    <location>
        <begin position="628"/>
        <end position="634"/>
    </location>
</feature>
<feature type="strand" evidence="6">
    <location>
        <begin position="641"/>
        <end position="644"/>
    </location>
</feature>
<feature type="strand" evidence="6">
    <location>
        <begin position="647"/>
        <end position="649"/>
    </location>
</feature>
<feature type="strand" evidence="6">
    <location>
        <begin position="659"/>
        <end position="663"/>
    </location>
</feature>
<feature type="helix" evidence="6">
    <location>
        <begin position="675"/>
        <end position="677"/>
    </location>
</feature>
<feature type="strand" evidence="6">
    <location>
        <begin position="681"/>
        <end position="685"/>
    </location>
</feature>
<feature type="helix" evidence="6">
    <location>
        <begin position="687"/>
        <end position="689"/>
    </location>
</feature>
<feature type="strand" evidence="6">
    <location>
        <begin position="698"/>
        <end position="700"/>
    </location>
</feature>
<feature type="strand" evidence="6">
    <location>
        <begin position="714"/>
        <end position="717"/>
    </location>
</feature>
<feature type="helix" evidence="6">
    <location>
        <begin position="721"/>
        <end position="724"/>
    </location>
</feature>
<feature type="strand" evidence="6">
    <location>
        <begin position="731"/>
        <end position="738"/>
    </location>
</feature>
<feature type="strand" evidence="6">
    <location>
        <begin position="745"/>
        <end position="751"/>
    </location>
</feature>
<feature type="strand" evidence="6">
    <location>
        <begin position="758"/>
        <end position="762"/>
    </location>
</feature>
<feature type="strand" evidence="6">
    <location>
        <begin position="765"/>
        <end position="770"/>
    </location>
</feature>
<feature type="strand" evidence="6">
    <location>
        <begin position="777"/>
        <end position="784"/>
    </location>
</feature>
<feature type="strand" evidence="6">
    <location>
        <begin position="793"/>
        <end position="800"/>
    </location>
</feature>
<feature type="helix" evidence="6">
    <location>
        <begin position="815"/>
        <end position="817"/>
    </location>
</feature>
<feature type="strand" evidence="6">
    <location>
        <begin position="821"/>
        <end position="827"/>
    </location>
</feature>
<feature type="helix" evidence="6">
    <location>
        <begin position="832"/>
        <end position="834"/>
    </location>
</feature>
<feature type="strand" evidence="6">
    <location>
        <begin position="836"/>
        <end position="842"/>
    </location>
</feature>
<feature type="turn" evidence="6">
    <location>
        <begin position="843"/>
        <end position="846"/>
    </location>
</feature>
<feature type="turn" evidence="6">
    <location>
        <begin position="851"/>
        <end position="853"/>
    </location>
</feature>
<feature type="strand" evidence="6">
    <location>
        <begin position="855"/>
        <end position="857"/>
    </location>
</feature>
<feature type="helix" evidence="6">
    <location>
        <begin position="862"/>
        <end position="865"/>
    </location>
</feature>
<feature type="turn" evidence="6">
    <location>
        <begin position="866"/>
        <end position="869"/>
    </location>
</feature>
<feature type="strand" evidence="6">
    <location>
        <begin position="870"/>
        <end position="872"/>
    </location>
</feature>
<feature type="turn" evidence="6">
    <location>
        <begin position="883"/>
        <end position="885"/>
    </location>
</feature>
<feature type="strand" evidence="6">
    <location>
        <begin position="887"/>
        <end position="900"/>
    </location>
</feature>
<feature type="strand" evidence="6">
    <location>
        <begin position="911"/>
        <end position="915"/>
    </location>
</feature>
<feature type="strand" evidence="6">
    <location>
        <begin position="925"/>
        <end position="931"/>
    </location>
</feature>
<feature type="strand" evidence="6">
    <location>
        <begin position="934"/>
        <end position="940"/>
    </location>
</feature>
<feature type="turn" evidence="6">
    <location>
        <begin position="941"/>
        <end position="943"/>
    </location>
</feature>
<feature type="strand" evidence="6">
    <location>
        <begin position="948"/>
        <end position="951"/>
    </location>
</feature>
<feature type="strand" evidence="6">
    <location>
        <begin position="960"/>
        <end position="970"/>
    </location>
</feature>
<feature type="strand" evidence="6">
    <location>
        <begin position="981"/>
        <end position="985"/>
    </location>
</feature>
<reference key="1">
    <citation type="journal article" date="2004" name="J. Mol. Biol.">
        <title>Crystal structures of beta-galactosidase from Penicillium sp. and its complex with galactose.</title>
        <authorList>
            <person name="Rojas A.L."/>
            <person name="Nagem R.A."/>
            <person name="Neustroev K.N."/>
            <person name="Arand M."/>
            <person name="Adamska M."/>
            <person name="Eneyskaya E.V."/>
            <person name="Kulminskaya A.A."/>
            <person name="Garratt R.C."/>
            <person name="Golubev A.M."/>
            <person name="Polikarpov I."/>
        </authorList>
    </citation>
    <scope>NUCLEOTIDE SEQUENCE [GENOMIC DNA]</scope>
    <scope>X-RAY CRYSTALLOGRAPHY (1.9 ANGSTROMS) OF 41-1011 IN COMPLEX WITH GALACTOSE</scope>
    <scope>GLYCOSYLATION AT ASN-374; ASN-456; ASN-625; ASN-707; ASN-763; ASN-780 AND ASN-917</scope>
    <scope>DISULFIDE BONDS</scope>
</reference>
<reference key="2">
    <citation type="journal article" date="2000" name="Acta Crystallogr. D">
        <title>Purification, crystallization and preliminary diffraction study of beta-galactosidase from Penicillium sp.</title>
        <authorList>
            <person name="Neustroev K.N."/>
            <person name="de Sousa E.A."/>
            <person name="Golubev A.M."/>
            <person name="Brandao Neto J.R."/>
            <person name="Eneyskaya E.V."/>
            <person name="Kulminskaya A.A."/>
            <person name="Polikarpov I."/>
        </authorList>
    </citation>
    <scope>CRYSTALLIZATION</scope>
    <scope>FUNCTION</scope>
    <scope>CATALYTIC ACTIVITY</scope>
    <scope>SUBUNIT</scope>
    <scope>SUBCELLULAR LOCATION</scope>
</reference>
<sequence>MKLLSSWVVAALAAQAAGAAISHKLDGFTIREHADPAKRALLQKYVTWDEHSIFVNGERLMIFSGEVHPYRLPVASLYIDIFEKVKALGFNCVSFYVDWALLEGNPGHYSAEGIFDLQPFFDAAKEAGIYLLARPGPYINAEVSGGGFPGWLQRVDGILRTSDEAYLKATDNYASNIAATIAKAQITNGGPIILYQPENEYSGACCGYNGFPDGSYMQYIEDHARDAGIVVPFISNDAWAAGHNAPGTGAGAVDIYGHDSYPLGFDCANPSTWPSGNLPTYFHTSHEQQSPSTPYSLVEFQGGAFDPWGGVGFAKCAALLNHEFERVFYKNDFSFGVAFLNLYMIFGGTNWGNLGHPGGYTSYDYGSAISESRNITREKYSELKLLGNFAKVSPGYLVANPGDLSTSTYTNTADLTVTPLLGSNSSASSFFVIRHSDYSSQASVEYKLTVPTSAGNLTIPQLGGSLTLSGRDSKIHVTDYDVAGTNILYSTAEVFTWKKFNNEKVLVLYGGPGEHHEFAVSGASSSSVVEGSSSGISSKKVGKALVVAWDVSTARRIVQVGSLKVFLLDRNSAYNYWVPQVPTKGTAPGYSNQETTASSIIVKAGYLVRSAYLDGNDLHIQADFNATTPIEVVGAPSGAKNLVINGKKTQTKVDKNGIWSASVAYTAPKVQLPSLKSLKWKSVDTLPEAKNTYDDSAWTSADHAYTNNSAHSLQTPTSLFASDYGYHTGALLFRGHFTANGKEKTFFVQTKGGTAYGHSIWINETYVGSWAGTSINDNNNATYTLPTLQSGKNYVITVVIDNMGLDEDWTIGSEDMKNPRGIIQYSLSGQEASAISWKLTGNLGGENYRDTVRGPLNEGGLYAERQGFHQPQPPTQKWDSSSPFTGLTKPGIRFYSTSFDLDLPSGYDIPLYFNFGNSTSTPAAYRVQLYVNGYQYGKYVNNIGPQTSFPVPEGILNYHGTNWLALSLWAQEDNGAKLDSFELINTTPVLTSLGEVKSVNQPKYQARKGAY</sequence>
<accession>Q700S9</accession>
<organism>
    <name type="scientific">Penicillium sp</name>
    <dbReference type="NCBI Taxonomy" id="5081"/>
    <lineage>
        <taxon>Eukaryota</taxon>
        <taxon>Fungi</taxon>
        <taxon>Dikarya</taxon>
        <taxon>Ascomycota</taxon>
        <taxon>Pezizomycotina</taxon>
        <taxon>Eurotiomycetes</taxon>
        <taxon>Eurotiomycetidae</taxon>
        <taxon>Eurotiales</taxon>
        <taxon>Aspergillaceae</taxon>
        <taxon>Penicillium</taxon>
    </lineage>
</organism>
<evidence type="ECO:0000255" key="1"/>
<evidence type="ECO:0000269" key="2">
    <source>
    </source>
</evidence>
<evidence type="ECO:0000269" key="3">
    <source>
    </source>
</evidence>
<evidence type="ECO:0000305" key="4"/>
<evidence type="ECO:0007744" key="5">
    <source>
        <dbReference type="PDB" id="1XC6"/>
    </source>
</evidence>
<evidence type="ECO:0007829" key="6">
    <source>
        <dbReference type="PDB" id="1TG7"/>
    </source>
</evidence>
<proteinExistence type="evidence at protein level"/>